<organism>
    <name type="scientific">Conus parius</name>
    <name type="common">Cone snail</name>
    <dbReference type="NCBI Taxonomy" id="505247"/>
    <lineage>
        <taxon>Eukaryota</taxon>
        <taxon>Metazoa</taxon>
        <taxon>Spiralia</taxon>
        <taxon>Lophotrochozoa</taxon>
        <taxon>Mollusca</taxon>
        <taxon>Gastropoda</taxon>
        <taxon>Caenogastropoda</taxon>
        <taxon>Neogastropoda</taxon>
        <taxon>Conoidea</taxon>
        <taxon>Conidae</taxon>
        <taxon>Conus</taxon>
        <taxon>Phasmoconus</taxon>
    </lineage>
</organism>
<feature type="peptide" id="PRO_0000353127" description="Conantokin-Pr1" evidence="2">
    <location>
        <begin position="1"/>
        <end position="19"/>
    </location>
</feature>
<feature type="binding site" description="via 4-carboxyglutamate" evidence="1">
    <location>
        <position position="7"/>
    </location>
    <ligand>
        <name>a divalent metal cation</name>
        <dbReference type="ChEBI" id="CHEBI:60240"/>
    </ligand>
</feature>
<feature type="binding site" description="via 4-carboxyglutamate" evidence="1">
    <location>
        <position position="11"/>
    </location>
    <ligand>
        <name>a divalent metal cation</name>
        <dbReference type="ChEBI" id="CHEBI:60240"/>
    </ligand>
</feature>
<feature type="modified residue" description="4-carboxyglutamate" evidence="2">
    <location>
        <position position="4"/>
    </location>
</feature>
<feature type="modified residue" description="4-carboxyglutamate" evidence="2">
    <location>
        <position position="7"/>
    </location>
</feature>
<feature type="modified residue" description="4-carboxyglutamate" evidence="2">
    <location>
        <position position="11"/>
    </location>
</feature>
<sequence length="19" mass="2220">GEDEYAEGIREYQLIHGKI</sequence>
<protein>
    <recommendedName>
        <fullName evidence="3">Conantokin-Pr1</fullName>
        <shortName evidence="3">Con-Pr1</shortName>
    </recommendedName>
</protein>
<name>CKP1_CONPI</name>
<keyword id="KW-0106">Calcium</keyword>
<keyword id="KW-0903">Direct protein sequencing</keyword>
<keyword id="KW-0301">Gamma-carboxyglutamic acid</keyword>
<keyword id="KW-0872">Ion channel impairing toxin</keyword>
<keyword id="KW-1028">Ionotropic glutamate receptor inhibitor</keyword>
<keyword id="KW-0460">Magnesium</keyword>
<keyword id="KW-0479">Metal-binding</keyword>
<keyword id="KW-0528">Neurotoxin</keyword>
<keyword id="KW-0629">Postsynaptic neurotoxin</keyword>
<keyword id="KW-0964">Secreted</keyword>
<keyword id="KW-0800">Toxin</keyword>
<accession>P0C8E0</accession>
<comment type="function">
    <text evidence="2">Conantokins inhibit N-methyl-D-aspartate (NMDA) receptors. This toxin has highest potency for the NR2B/GRIN2B subunit. It induces sleep in 10-day-old mice when injected intracranially, and hyperactivity in 24-day-old mice.</text>
</comment>
<comment type="cofactor">
    <cofactor evidence="2">
        <name>Ca(2+)</name>
        <dbReference type="ChEBI" id="CHEBI:29108"/>
    </cofactor>
    <cofactor evidence="2">
        <name>Mg(2+)</name>
        <dbReference type="ChEBI" id="CHEBI:18420"/>
    </cofactor>
    <text evidence="2">Adopts alpha-helical conformations in the presence of divalent cations and is unstructured in the absence of divalent cations.</text>
</comment>
<comment type="subcellular location">
    <subcellularLocation>
        <location evidence="2">Secreted</location>
    </subcellularLocation>
</comment>
<comment type="tissue specificity">
    <text evidence="5">Expressed by the venom duct.</text>
</comment>
<comment type="mass spectrometry" mass="2352.8" method="MALDI" evidence="2"/>
<comment type="miscellaneous">
    <text evidence="4">The mature peptide does not contain cysteine residue.</text>
</comment>
<comment type="similarity">
    <text evidence="4">Belongs to the conotoxin B superfamily.</text>
</comment>
<evidence type="ECO:0000250" key="1">
    <source>
        <dbReference type="UniProtKB" id="P07231"/>
    </source>
</evidence>
<evidence type="ECO:0000269" key="2">
    <source>
    </source>
</evidence>
<evidence type="ECO:0000303" key="3">
    <source>
    </source>
</evidence>
<evidence type="ECO:0000305" key="4"/>
<evidence type="ECO:0000305" key="5">
    <source>
    </source>
</evidence>
<proteinExistence type="evidence at protein level"/>
<dbReference type="ConoServer" id="3537">
    <property type="toxin name" value="Conantokin-Pr1"/>
</dbReference>
<dbReference type="GO" id="GO:0005576">
    <property type="term" value="C:extracellular region"/>
    <property type="evidence" value="ECO:0007669"/>
    <property type="project" value="UniProtKB-SubCell"/>
</dbReference>
<dbReference type="GO" id="GO:0035792">
    <property type="term" value="C:host cell postsynaptic membrane"/>
    <property type="evidence" value="ECO:0007669"/>
    <property type="project" value="UniProtKB-KW"/>
</dbReference>
<dbReference type="GO" id="GO:0099106">
    <property type="term" value="F:ion channel regulator activity"/>
    <property type="evidence" value="ECO:0007669"/>
    <property type="project" value="UniProtKB-KW"/>
</dbReference>
<dbReference type="GO" id="GO:0046872">
    <property type="term" value="F:metal ion binding"/>
    <property type="evidence" value="ECO:0007669"/>
    <property type="project" value="UniProtKB-KW"/>
</dbReference>
<dbReference type="GO" id="GO:0090729">
    <property type="term" value="F:toxin activity"/>
    <property type="evidence" value="ECO:0007669"/>
    <property type="project" value="UniProtKB-KW"/>
</dbReference>
<dbReference type="DisProt" id="DP02320"/>
<reference key="1">
    <citation type="journal article" date="2007" name="J. Biol. Chem.">
        <title>Novel conantokins from Conus parius venom are specific antagonists of N-methyl-D-aspartate receptors.</title>
        <authorList>
            <person name="Teichert R.W."/>
            <person name="Jimenez E.C."/>
            <person name="Twede V."/>
            <person name="Watkins M."/>
            <person name="Hollmann M."/>
            <person name="Bulaj G."/>
            <person name="Olivera B.M."/>
        </authorList>
    </citation>
    <scope>PROTEIN SEQUENCE</scope>
    <scope>SYNTHESIS</scope>
    <scope>FUNCTION</scope>
    <scope>SUBCELLULAR LOCATION</scope>
    <scope>GAMMA-CARBOXYGLUTAMATION AT GLU-4; GLU-7 AND GLU-11</scope>
    <scope>MASS SPECTROMETRY</scope>
    <scope>COFACTOR</scope>
    <source>
        <tissue>Venom</tissue>
    </source>
</reference>